<protein>
    <recommendedName>
        <fullName evidence="7">Protein Niban 1</fullName>
    </recommendedName>
    <alternativeName>
        <fullName>Cell growth-inhibiting gene 39 protein</fullName>
    </alternativeName>
    <alternativeName>
        <fullName>Protein FAM129A</fullName>
    </alternativeName>
</protein>
<dbReference type="EMBL" id="AB050477">
    <property type="protein sequence ID" value="BAB17230.1"/>
    <property type="status" value="ALT_INIT"/>
    <property type="molecule type" value="mRNA"/>
</dbReference>
<dbReference type="EMBL" id="AF288391">
    <property type="protein sequence ID" value="AAG60611.1"/>
    <property type="molecule type" value="mRNA"/>
</dbReference>
<dbReference type="EMBL" id="AK022527">
    <property type="protein sequence ID" value="BAB14079.1"/>
    <property type="molecule type" value="mRNA"/>
</dbReference>
<dbReference type="EMBL" id="AY550972">
    <property type="protein sequence ID" value="AAT52218.1"/>
    <property type="molecule type" value="mRNA"/>
</dbReference>
<dbReference type="EMBL" id="AL096819">
    <property type="status" value="NOT_ANNOTATED_CDS"/>
    <property type="molecule type" value="Genomic_DNA"/>
</dbReference>
<dbReference type="EMBL" id="AL109865">
    <property type="status" value="NOT_ANNOTATED_CDS"/>
    <property type="molecule type" value="Genomic_DNA"/>
</dbReference>
<dbReference type="EMBL" id="AL109956">
    <property type="status" value="NOT_ANNOTATED_CDS"/>
    <property type="molecule type" value="Genomic_DNA"/>
</dbReference>
<dbReference type="EMBL" id="AL136086">
    <property type="status" value="NOT_ANNOTATED_CDS"/>
    <property type="molecule type" value="Genomic_DNA"/>
</dbReference>
<dbReference type="EMBL" id="BC030531">
    <property type="protein sequence ID" value="AAH30531.1"/>
    <property type="molecule type" value="mRNA"/>
</dbReference>
<dbReference type="EMBL" id="AK074139">
    <property type="protein sequence ID" value="BAB84965.1"/>
    <property type="molecule type" value="mRNA"/>
</dbReference>
<dbReference type="CCDS" id="CCDS1364.1"/>
<dbReference type="RefSeq" id="NP_443198.1">
    <property type="nucleotide sequence ID" value="NM_052966.4"/>
</dbReference>
<dbReference type="SMR" id="Q9BZQ8"/>
<dbReference type="BioGRID" id="125515">
    <property type="interactions" value="25"/>
</dbReference>
<dbReference type="FunCoup" id="Q9BZQ8">
    <property type="interactions" value="448"/>
</dbReference>
<dbReference type="IntAct" id="Q9BZQ8">
    <property type="interactions" value="4"/>
</dbReference>
<dbReference type="MINT" id="Q9BZQ8"/>
<dbReference type="STRING" id="9606.ENSP00000356481"/>
<dbReference type="GlyGen" id="Q9BZQ8">
    <property type="glycosylation" value="2 sites, 1 N-linked glycan (1 site), 1 O-linked glycan (1 site)"/>
</dbReference>
<dbReference type="iPTMnet" id="Q9BZQ8"/>
<dbReference type="MetOSite" id="Q9BZQ8"/>
<dbReference type="PhosphoSitePlus" id="Q9BZQ8"/>
<dbReference type="SwissPalm" id="Q9BZQ8"/>
<dbReference type="BioMuta" id="FAM129A"/>
<dbReference type="DMDM" id="22256936"/>
<dbReference type="CPTAC" id="CPTAC-1623"/>
<dbReference type="jPOST" id="Q9BZQ8"/>
<dbReference type="MassIVE" id="Q9BZQ8"/>
<dbReference type="PaxDb" id="9606-ENSP00000356481"/>
<dbReference type="PeptideAtlas" id="Q9BZQ8"/>
<dbReference type="ProteomicsDB" id="79893"/>
<dbReference type="Pumba" id="Q9BZQ8"/>
<dbReference type="Antibodypedia" id="34451">
    <property type="antibodies" value="197 antibodies from 31 providers"/>
</dbReference>
<dbReference type="DNASU" id="116496"/>
<dbReference type="Ensembl" id="ENST00000367511.4">
    <property type="protein sequence ID" value="ENSP00000356481.3"/>
    <property type="gene ID" value="ENSG00000135842.17"/>
</dbReference>
<dbReference type="GeneID" id="116496"/>
<dbReference type="KEGG" id="hsa:116496"/>
<dbReference type="MANE-Select" id="ENST00000367511.4">
    <property type="protein sequence ID" value="ENSP00000356481.3"/>
    <property type="RefSeq nucleotide sequence ID" value="NM_052966.4"/>
    <property type="RefSeq protein sequence ID" value="NP_443198.1"/>
</dbReference>
<dbReference type="UCSC" id="uc001gra.5">
    <property type="organism name" value="human"/>
</dbReference>
<dbReference type="AGR" id="HGNC:16784"/>
<dbReference type="CTD" id="116496"/>
<dbReference type="DisGeNET" id="116496"/>
<dbReference type="GeneCards" id="NIBAN1"/>
<dbReference type="HGNC" id="HGNC:16784">
    <property type="gene designation" value="NIBAN1"/>
</dbReference>
<dbReference type="HPA" id="ENSG00000135842">
    <property type="expression patterns" value="Tissue enhanced (heart)"/>
</dbReference>
<dbReference type="MIM" id="619294">
    <property type="type" value="gene"/>
</dbReference>
<dbReference type="neXtProt" id="NX_Q9BZQ8"/>
<dbReference type="OpenTargets" id="ENSG00000135842"/>
<dbReference type="PharmGKB" id="PA162385951"/>
<dbReference type="VEuPathDB" id="HostDB:ENSG00000135842"/>
<dbReference type="eggNOG" id="ENOG502QVNR">
    <property type="taxonomic scope" value="Eukaryota"/>
</dbReference>
<dbReference type="GeneTree" id="ENSGT00940000154149"/>
<dbReference type="HOGENOM" id="CLU_009718_0_1_1"/>
<dbReference type="InParanoid" id="Q9BZQ8"/>
<dbReference type="OMA" id="VARVHEC"/>
<dbReference type="OrthoDB" id="9010513at2759"/>
<dbReference type="PAN-GO" id="Q9BZQ8">
    <property type="GO annotations" value="0 GO annotations based on evolutionary models"/>
</dbReference>
<dbReference type="PhylomeDB" id="Q9BZQ8"/>
<dbReference type="TreeFam" id="TF333351"/>
<dbReference type="PathwayCommons" id="Q9BZQ8"/>
<dbReference type="SignaLink" id="Q9BZQ8"/>
<dbReference type="SIGNOR" id="Q9BZQ8"/>
<dbReference type="BioGRID-ORCS" id="116496">
    <property type="hits" value="14 hits in 1158 CRISPR screens"/>
</dbReference>
<dbReference type="ChiTaRS" id="FAM129A">
    <property type="organism name" value="human"/>
</dbReference>
<dbReference type="GeneWiki" id="FAM129A"/>
<dbReference type="GenomeRNAi" id="116496"/>
<dbReference type="Pharos" id="Q9BZQ8">
    <property type="development level" value="Tbio"/>
</dbReference>
<dbReference type="PRO" id="PR:Q9BZQ8"/>
<dbReference type="Proteomes" id="UP000005640">
    <property type="component" value="Chromosome 1"/>
</dbReference>
<dbReference type="RNAct" id="Q9BZQ8">
    <property type="molecule type" value="protein"/>
</dbReference>
<dbReference type="Bgee" id="ENSG00000135842">
    <property type="expression patterns" value="Expressed in blood vessel layer and 197 other cell types or tissues"/>
</dbReference>
<dbReference type="ExpressionAtlas" id="Q9BZQ8">
    <property type="expression patterns" value="baseline and differential"/>
</dbReference>
<dbReference type="GO" id="GO:0005737">
    <property type="term" value="C:cytoplasm"/>
    <property type="evidence" value="ECO:0000314"/>
    <property type="project" value="UniProtKB"/>
</dbReference>
<dbReference type="GO" id="GO:0005829">
    <property type="term" value="C:cytosol"/>
    <property type="evidence" value="ECO:0000314"/>
    <property type="project" value="HPA"/>
</dbReference>
<dbReference type="GO" id="GO:0070062">
    <property type="term" value="C:extracellular exosome"/>
    <property type="evidence" value="ECO:0007005"/>
    <property type="project" value="UniProtKB"/>
</dbReference>
<dbReference type="GO" id="GO:0016020">
    <property type="term" value="C:membrane"/>
    <property type="evidence" value="ECO:0007005"/>
    <property type="project" value="UniProtKB"/>
</dbReference>
<dbReference type="GO" id="GO:0005886">
    <property type="term" value="C:plasma membrane"/>
    <property type="evidence" value="ECO:0000314"/>
    <property type="project" value="HPA"/>
</dbReference>
<dbReference type="GO" id="GO:0001933">
    <property type="term" value="P:negative regulation of protein phosphorylation"/>
    <property type="evidence" value="ECO:0000250"/>
    <property type="project" value="UniProtKB"/>
</dbReference>
<dbReference type="GO" id="GO:0001934">
    <property type="term" value="P:positive regulation of protein phosphorylation"/>
    <property type="evidence" value="ECO:0000250"/>
    <property type="project" value="UniProtKB"/>
</dbReference>
<dbReference type="GO" id="GO:0045727">
    <property type="term" value="P:positive regulation of translation"/>
    <property type="evidence" value="ECO:0000250"/>
    <property type="project" value="UniProtKB"/>
</dbReference>
<dbReference type="GO" id="GO:0034976">
    <property type="term" value="P:response to endoplasmic reticulum stress"/>
    <property type="evidence" value="ECO:0000250"/>
    <property type="project" value="UniProtKB"/>
</dbReference>
<dbReference type="CDD" id="cd23949">
    <property type="entry name" value="Niban-like"/>
    <property type="match status" value="1"/>
</dbReference>
<dbReference type="InterPro" id="IPR026088">
    <property type="entry name" value="Niban-like"/>
</dbReference>
<dbReference type="PANTHER" id="PTHR14392">
    <property type="entry name" value="NIBAN FAMILY MEMBER"/>
    <property type="match status" value="1"/>
</dbReference>
<dbReference type="PANTHER" id="PTHR14392:SF3">
    <property type="entry name" value="PROTEIN NIBAN 1"/>
    <property type="match status" value="1"/>
</dbReference>
<name>NIBA1_HUMAN</name>
<sequence length="928" mass="103135">MGGSASSQLDEGKCAYIRGKTEAAIKNFSPYYSRQYSVAFCNHVRTEVEQQRDLTSQFLKTKPPLAPGTILYEAELSQFSEDIKKWKERYVVVKNDYAVESYENKEAYQRGAAPKCRILPAGGKVLTSEDEYNLLSDRHFPDPLASSEKENTQPFVVLPKEFPVYLWQPFFRHGYFCFHEAADQKRFSALLSDCVRHLNHDYMKQMTFEAQAFLEAVQFFRQEKGHYGSWEMITGDEIQILSNLVMEELLPTLQTDLLPKMKGKKNDRKRTWLGLLEEAYTLVQHQVSEGLSALKEECRALTKGLEGTIRSDMDQIVNSKNYLIGKIKAMVAQPAEKSCLESVQPFLASILEELMGPVSSGFSEVRVLFEKEVNEVSQNFQTTKDSVQLKEHLDRLMNLPLHSVKMEPCYTKVNLLHERLQDLKSRFRFPHIDLVVQRTQNYMQELMENAVFTFEQLLSPHLQGEASKTAVAIEKVKLRVLKQYDYDSSTIRKKIFQEALVQITLPTVQKALASTCKPELQKYEQFIFADHTNMIHVENVYEEILHQILLDETLKVIKEAAILKKHNLFEDNMALPSESVSSLTDLKPPTGSNQASPARRASAILPGVLGSETLSNEVFQESEEEKQPEVPSSLAKGESLSLPGPSPPPDGTEQVIISRVDDPVVNPVATEDTAGLPGTCSSELEFGGTLEDEEPAQEEPEPITASGSLKALRKLLTASVEVPVDSAPVMEEDTNGESHVPQENEEEEEKEPSQAAAIHPDNCEESEVSEREAQPPCPEAHGEELGGFPEVGSPASPPASGGLTEEPLGPMEGELPGEACTLTAHEGRGGKCTEEGDASQQEGCTLGSDPICLSESQVSEEQEEMGGQSSAAQATASVNAEEIKVARIHECQWVVEDAPNPDVLLSHKDDVKEGEGGQESFPELPSEE</sequence>
<proteinExistence type="evidence at protein level"/>
<comment type="function">
    <text evidence="1">Regulates phosphorylation of a number of proteins involved in translation regulation including EIF2A, EIF4EBP1 and RPS6KB1. May be involved in the endoplasmic reticulum stress response (By similarity).</text>
</comment>
<comment type="interaction">
    <interactant intactId="EBI-6916466">
        <id>Q9BZQ8</id>
    </interactant>
    <interactant intactId="EBI-296087">
        <id>P31749</id>
        <label>AKT1</label>
    </interactant>
    <organismsDiffer>false</organismsDiffer>
    <experiments>2</experiments>
</comment>
<comment type="interaction">
    <interactant intactId="EBI-6916466">
        <id>Q9BZQ8</id>
    </interactant>
    <interactant intactId="EBI-742054">
        <id>Q96D03</id>
        <label>DDIT4L</label>
    </interactant>
    <organismsDiffer>false</organismsDiffer>
    <experiments>3</experiments>
</comment>
<comment type="interaction">
    <interactant intactId="EBI-6916466">
        <id>Q9BZQ8</id>
    </interactant>
    <interactant intactId="EBI-701903">
        <id>Q14192</id>
        <label>FHL2</label>
    </interactant>
    <organismsDiffer>false</organismsDiffer>
    <experiments>6</experiments>
</comment>
<comment type="interaction">
    <interactant intactId="EBI-6916466">
        <id>Q9BZQ8</id>
    </interactant>
    <interactant intactId="EBI-78579">
        <id>P06748</id>
        <label>NPM1</label>
    </interactant>
    <organismsDiffer>false</organismsDiffer>
    <experiments>7</experiments>
</comment>
<comment type="subcellular location">
    <subcellularLocation>
        <location evidence="4">Cytoplasm</location>
    </subcellularLocation>
    <subcellularLocation>
        <location evidence="7">Membrane</location>
        <topology evidence="7">Lipid-anchor</topology>
    </subcellularLocation>
</comment>
<comment type="tissue specificity">
    <text evidence="3 4">Expressed in various types of thyroid tumor such as papillary thyroid carcinomas and oxyphilic thyroid tumors but not in normal thyroid tissue (at protein level). Strongly expressed in heart, skeletal muscle, pancreas, white blood cells and prostate with moderate expression in colon and spleen. Expressed in renal carcinoma cells but not in normal kidney.</text>
</comment>
<comment type="miscellaneous">
    <text>'Niban' means 'second' in Japanese.</text>
</comment>
<comment type="similarity">
    <text evidence="7">Belongs to the Niban family.</text>
</comment>
<comment type="sequence caution" evidence="7">
    <conflict type="erroneous initiation">
        <sequence resource="EMBL-CDS" id="BAB17230"/>
    </conflict>
    <text>Truncated N-terminus.</text>
</comment>
<gene>
    <name evidence="8" type="primary">NIBAN1</name>
    <name type="synonym">C1orf24</name>
    <name type="synonym">FAM129A</name>
    <name type="synonym">NIBAN</name>
    <name type="ORF">GIG39</name>
</gene>
<evidence type="ECO:0000250" key="1"/>
<evidence type="ECO:0000256" key="2">
    <source>
        <dbReference type="SAM" id="MobiDB-lite"/>
    </source>
</evidence>
<evidence type="ECO:0000269" key="3">
    <source>
    </source>
</evidence>
<evidence type="ECO:0000269" key="4">
    <source>
    </source>
</evidence>
<evidence type="ECO:0000269" key="5">
    <source>
    </source>
</evidence>
<evidence type="ECO:0000269" key="6">
    <source ref="7"/>
</evidence>
<evidence type="ECO:0000305" key="7"/>
<evidence type="ECO:0000312" key="8">
    <source>
        <dbReference type="HGNC" id="HGNC:16784"/>
    </source>
</evidence>
<evidence type="ECO:0007744" key="9">
    <source>
    </source>
</evidence>
<evidence type="ECO:0007744" key="10">
    <source>
    </source>
</evidence>
<evidence type="ECO:0007744" key="11">
    <source>
    </source>
</evidence>
<organism>
    <name type="scientific">Homo sapiens</name>
    <name type="common">Human</name>
    <dbReference type="NCBI Taxonomy" id="9606"/>
    <lineage>
        <taxon>Eukaryota</taxon>
        <taxon>Metazoa</taxon>
        <taxon>Chordata</taxon>
        <taxon>Craniata</taxon>
        <taxon>Vertebrata</taxon>
        <taxon>Euteleostomi</taxon>
        <taxon>Mammalia</taxon>
        <taxon>Eutheria</taxon>
        <taxon>Euarchontoglires</taxon>
        <taxon>Primates</taxon>
        <taxon>Haplorrhini</taxon>
        <taxon>Catarrhini</taxon>
        <taxon>Hominidae</taxon>
        <taxon>Homo</taxon>
    </lineage>
</organism>
<reference key="1">
    <citation type="journal article" date="2000" name="Jpn. J. Cancer Res.">
        <title>A novel gene 'Niban' upregulated in renal carcinogenesis: cloning by the cDNA-amplified fragment length polymorphism approach.</title>
        <authorList>
            <person name="Majima S."/>
            <person name="Kajino K."/>
            <person name="Fukuda T."/>
            <person name="Otsuka F."/>
            <person name="Hino O."/>
        </authorList>
    </citation>
    <scope>NUCLEOTIDE SEQUENCE [MRNA]</scope>
    <scope>TISSUE SPECIFICITY</scope>
    <source>
        <tissue>Renal cell carcinoma</tissue>
    </source>
</reference>
<reference key="2">
    <citation type="journal article" date="2001" name="Genomics">
        <title>Cloning and characterization of 13 novel transcripts and the human RGS8 gene from the 1q25 region encompassing the hereditary prostate cancer (HPC1) locus.</title>
        <authorList>
            <person name="Sood R."/>
            <person name="Bonner T.I."/>
            <person name="Malakowska I."/>
            <person name="Stephan D.A."/>
            <person name="Robbins C.M."/>
            <person name="Connors T.D."/>
            <person name="Morgenbesser S.D."/>
            <person name="Su K."/>
            <person name="Faruque M.U."/>
            <person name="Pinkett H."/>
            <person name="Graham C."/>
            <person name="Baxevanis A.D."/>
            <person name="Klinger K.W."/>
            <person name="Landes G.M."/>
            <person name="Trent J.M."/>
            <person name="Carpten J.D."/>
        </authorList>
    </citation>
    <scope>NUCLEOTIDE SEQUENCE [MRNA]</scope>
</reference>
<reference key="3">
    <citation type="journal article" date="2004" name="Nat. Genet.">
        <title>Complete sequencing and characterization of 21,243 full-length human cDNAs.</title>
        <authorList>
            <person name="Ota T."/>
            <person name="Suzuki Y."/>
            <person name="Nishikawa T."/>
            <person name="Otsuki T."/>
            <person name="Sugiyama T."/>
            <person name="Irie R."/>
            <person name="Wakamatsu A."/>
            <person name="Hayashi K."/>
            <person name="Sato H."/>
            <person name="Nagai K."/>
            <person name="Kimura K."/>
            <person name="Makita H."/>
            <person name="Sekine M."/>
            <person name="Obayashi M."/>
            <person name="Nishi T."/>
            <person name="Shibahara T."/>
            <person name="Tanaka T."/>
            <person name="Ishii S."/>
            <person name="Yamamoto J."/>
            <person name="Saito K."/>
            <person name="Kawai Y."/>
            <person name="Isono Y."/>
            <person name="Nakamura Y."/>
            <person name="Nagahari K."/>
            <person name="Murakami K."/>
            <person name="Yasuda T."/>
            <person name="Iwayanagi T."/>
            <person name="Wagatsuma M."/>
            <person name="Shiratori A."/>
            <person name="Sudo H."/>
            <person name="Hosoiri T."/>
            <person name="Kaku Y."/>
            <person name="Kodaira H."/>
            <person name="Kondo H."/>
            <person name="Sugawara M."/>
            <person name="Takahashi M."/>
            <person name="Kanda K."/>
            <person name="Yokoi T."/>
            <person name="Furuya T."/>
            <person name="Kikkawa E."/>
            <person name="Omura Y."/>
            <person name="Abe K."/>
            <person name="Kamihara K."/>
            <person name="Katsuta N."/>
            <person name="Sato K."/>
            <person name="Tanikawa M."/>
            <person name="Yamazaki M."/>
            <person name="Ninomiya K."/>
            <person name="Ishibashi T."/>
            <person name="Yamashita H."/>
            <person name="Murakawa K."/>
            <person name="Fujimori K."/>
            <person name="Tanai H."/>
            <person name="Kimata M."/>
            <person name="Watanabe M."/>
            <person name="Hiraoka S."/>
            <person name="Chiba Y."/>
            <person name="Ishida S."/>
            <person name="Ono Y."/>
            <person name="Takiguchi S."/>
            <person name="Watanabe S."/>
            <person name="Yosida M."/>
            <person name="Hotuta T."/>
            <person name="Kusano J."/>
            <person name="Kanehori K."/>
            <person name="Takahashi-Fujii A."/>
            <person name="Hara H."/>
            <person name="Tanase T.-O."/>
            <person name="Nomura Y."/>
            <person name="Togiya S."/>
            <person name="Komai F."/>
            <person name="Hara R."/>
            <person name="Takeuchi K."/>
            <person name="Arita M."/>
            <person name="Imose N."/>
            <person name="Musashino K."/>
            <person name="Yuuki H."/>
            <person name="Oshima A."/>
            <person name="Sasaki N."/>
            <person name="Aotsuka S."/>
            <person name="Yoshikawa Y."/>
            <person name="Matsunawa H."/>
            <person name="Ichihara T."/>
            <person name="Shiohata N."/>
            <person name="Sano S."/>
            <person name="Moriya S."/>
            <person name="Momiyama H."/>
            <person name="Satoh N."/>
            <person name="Takami S."/>
            <person name="Terashima Y."/>
            <person name="Suzuki O."/>
            <person name="Nakagawa S."/>
            <person name="Senoh A."/>
            <person name="Mizoguchi H."/>
            <person name="Goto Y."/>
            <person name="Shimizu F."/>
            <person name="Wakebe H."/>
            <person name="Hishigaki H."/>
            <person name="Watanabe T."/>
            <person name="Sugiyama A."/>
            <person name="Takemoto M."/>
            <person name="Kawakami B."/>
            <person name="Yamazaki M."/>
            <person name="Watanabe K."/>
            <person name="Kumagai A."/>
            <person name="Itakura S."/>
            <person name="Fukuzumi Y."/>
            <person name="Fujimori Y."/>
            <person name="Komiyama M."/>
            <person name="Tashiro H."/>
            <person name="Tanigami A."/>
            <person name="Fujiwara T."/>
            <person name="Ono T."/>
            <person name="Yamada K."/>
            <person name="Fujii Y."/>
            <person name="Ozaki K."/>
            <person name="Hirao M."/>
            <person name="Ohmori Y."/>
            <person name="Kawabata A."/>
            <person name="Hikiji T."/>
            <person name="Kobatake N."/>
            <person name="Inagaki H."/>
            <person name="Ikema Y."/>
            <person name="Okamoto S."/>
            <person name="Okitani R."/>
            <person name="Kawakami T."/>
            <person name="Noguchi S."/>
            <person name="Itoh T."/>
            <person name="Shigeta K."/>
            <person name="Senba T."/>
            <person name="Matsumura K."/>
            <person name="Nakajima Y."/>
            <person name="Mizuno T."/>
            <person name="Morinaga M."/>
            <person name="Sasaki M."/>
            <person name="Togashi T."/>
            <person name="Oyama M."/>
            <person name="Hata H."/>
            <person name="Watanabe M."/>
            <person name="Komatsu T."/>
            <person name="Mizushima-Sugano J."/>
            <person name="Satoh T."/>
            <person name="Shirai Y."/>
            <person name="Takahashi Y."/>
            <person name="Nakagawa K."/>
            <person name="Okumura K."/>
            <person name="Nagase T."/>
            <person name="Nomura N."/>
            <person name="Kikuchi H."/>
            <person name="Masuho Y."/>
            <person name="Yamashita R."/>
            <person name="Nakai K."/>
            <person name="Yada T."/>
            <person name="Nakamura Y."/>
            <person name="Ohara O."/>
            <person name="Isogai T."/>
            <person name="Sugano S."/>
        </authorList>
    </citation>
    <scope>NUCLEOTIDE SEQUENCE [LARGE SCALE MRNA]</scope>
    <source>
        <tissue>Teratocarcinoma</tissue>
    </source>
</reference>
<reference key="4">
    <citation type="submission" date="2004-02" db="EMBL/GenBank/DDBJ databases">
        <title>Identification of a human cell growth inhibiting gene.</title>
        <authorList>
            <person name="Kim J.W."/>
        </authorList>
    </citation>
    <scope>NUCLEOTIDE SEQUENCE [LARGE SCALE MRNA]</scope>
</reference>
<reference key="5">
    <citation type="journal article" date="2006" name="Nature">
        <title>The DNA sequence and biological annotation of human chromosome 1.</title>
        <authorList>
            <person name="Gregory S.G."/>
            <person name="Barlow K.F."/>
            <person name="McLay K.E."/>
            <person name="Kaul R."/>
            <person name="Swarbreck D."/>
            <person name="Dunham A."/>
            <person name="Scott C.E."/>
            <person name="Howe K.L."/>
            <person name="Woodfine K."/>
            <person name="Spencer C.C.A."/>
            <person name="Jones M.C."/>
            <person name="Gillson C."/>
            <person name="Searle S."/>
            <person name="Zhou Y."/>
            <person name="Kokocinski F."/>
            <person name="McDonald L."/>
            <person name="Evans R."/>
            <person name="Phillips K."/>
            <person name="Atkinson A."/>
            <person name="Cooper R."/>
            <person name="Jones C."/>
            <person name="Hall R.E."/>
            <person name="Andrews T.D."/>
            <person name="Lloyd C."/>
            <person name="Ainscough R."/>
            <person name="Almeida J.P."/>
            <person name="Ambrose K.D."/>
            <person name="Anderson F."/>
            <person name="Andrew R.W."/>
            <person name="Ashwell R.I.S."/>
            <person name="Aubin K."/>
            <person name="Babbage A.K."/>
            <person name="Bagguley C.L."/>
            <person name="Bailey J."/>
            <person name="Beasley H."/>
            <person name="Bethel G."/>
            <person name="Bird C.P."/>
            <person name="Bray-Allen S."/>
            <person name="Brown J.Y."/>
            <person name="Brown A.J."/>
            <person name="Buckley D."/>
            <person name="Burton J."/>
            <person name="Bye J."/>
            <person name="Carder C."/>
            <person name="Chapman J.C."/>
            <person name="Clark S.Y."/>
            <person name="Clarke G."/>
            <person name="Clee C."/>
            <person name="Cobley V."/>
            <person name="Collier R.E."/>
            <person name="Corby N."/>
            <person name="Coville G.J."/>
            <person name="Davies J."/>
            <person name="Deadman R."/>
            <person name="Dunn M."/>
            <person name="Earthrowl M."/>
            <person name="Ellington A.G."/>
            <person name="Errington H."/>
            <person name="Frankish A."/>
            <person name="Frankland J."/>
            <person name="French L."/>
            <person name="Garner P."/>
            <person name="Garnett J."/>
            <person name="Gay L."/>
            <person name="Ghori M.R.J."/>
            <person name="Gibson R."/>
            <person name="Gilby L.M."/>
            <person name="Gillett W."/>
            <person name="Glithero R.J."/>
            <person name="Grafham D.V."/>
            <person name="Griffiths C."/>
            <person name="Griffiths-Jones S."/>
            <person name="Grocock R."/>
            <person name="Hammond S."/>
            <person name="Harrison E.S.I."/>
            <person name="Hart E."/>
            <person name="Haugen E."/>
            <person name="Heath P.D."/>
            <person name="Holmes S."/>
            <person name="Holt K."/>
            <person name="Howden P.J."/>
            <person name="Hunt A.R."/>
            <person name="Hunt S.E."/>
            <person name="Hunter G."/>
            <person name="Isherwood J."/>
            <person name="James R."/>
            <person name="Johnson C."/>
            <person name="Johnson D."/>
            <person name="Joy A."/>
            <person name="Kay M."/>
            <person name="Kershaw J.K."/>
            <person name="Kibukawa M."/>
            <person name="Kimberley A.M."/>
            <person name="King A."/>
            <person name="Knights A.J."/>
            <person name="Lad H."/>
            <person name="Laird G."/>
            <person name="Lawlor S."/>
            <person name="Leongamornlert D.A."/>
            <person name="Lloyd D.M."/>
            <person name="Loveland J."/>
            <person name="Lovell J."/>
            <person name="Lush M.J."/>
            <person name="Lyne R."/>
            <person name="Martin S."/>
            <person name="Mashreghi-Mohammadi M."/>
            <person name="Matthews L."/>
            <person name="Matthews N.S.W."/>
            <person name="McLaren S."/>
            <person name="Milne S."/>
            <person name="Mistry S."/>
            <person name="Moore M.J.F."/>
            <person name="Nickerson T."/>
            <person name="O'Dell C.N."/>
            <person name="Oliver K."/>
            <person name="Palmeiri A."/>
            <person name="Palmer S.A."/>
            <person name="Parker A."/>
            <person name="Patel D."/>
            <person name="Pearce A.V."/>
            <person name="Peck A.I."/>
            <person name="Pelan S."/>
            <person name="Phelps K."/>
            <person name="Phillimore B.J."/>
            <person name="Plumb R."/>
            <person name="Rajan J."/>
            <person name="Raymond C."/>
            <person name="Rouse G."/>
            <person name="Saenphimmachak C."/>
            <person name="Sehra H.K."/>
            <person name="Sheridan E."/>
            <person name="Shownkeen R."/>
            <person name="Sims S."/>
            <person name="Skuce C.D."/>
            <person name="Smith M."/>
            <person name="Steward C."/>
            <person name="Subramanian S."/>
            <person name="Sycamore N."/>
            <person name="Tracey A."/>
            <person name="Tromans A."/>
            <person name="Van Helmond Z."/>
            <person name="Wall M."/>
            <person name="Wallis J.M."/>
            <person name="White S."/>
            <person name="Whitehead S.L."/>
            <person name="Wilkinson J.E."/>
            <person name="Willey D.L."/>
            <person name="Williams H."/>
            <person name="Wilming L."/>
            <person name="Wray P.W."/>
            <person name="Wu Z."/>
            <person name="Coulson A."/>
            <person name="Vaudin M."/>
            <person name="Sulston J.E."/>
            <person name="Durbin R.M."/>
            <person name="Hubbard T."/>
            <person name="Wooster R."/>
            <person name="Dunham I."/>
            <person name="Carter N.P."/>
            <person name="McVean G."/>
            <person name="Ross M.T."/>
            <person name="Harrow J."/>
            <person name="Olson M.V."/>
            <person name="Beck S."/>
            <person name="Rogers J."/>
            <person name="Bentley D.R."/>
        </authorList>
    </citation>
    <scope>NUCLEOTIDE SEQUENCE [LARGE SCALE GENOMIC DNA]</scope>
</reference>
<reference key="6">
    <citation type="journal article" date="2004" name="Genome Res.">
        <title>The status, quality, and expansion of the NIH full-length cDNA project: the Mammalian Gene Collection (MGC).</title>
        <authorList>
            <consortium name="The MGC Project Team"/>
        </authorList>
    </citation>
    <scope>NUCLEOTIDE SEQUENCE [LARGE SCALE MRNA]</scope>
    <source>
        <tissue>Leukocyte</tissue>
    </source>
</reference>
<reference key="7">
    <citation type="submission" date="2002-01" db="EMBL/GenBank/DDBJ databases">
        <title>The nucleotide sequence of a long cDNA clone isolated from human spleen.</title>
        <authorList>
            <person name="Jikuya H."/>
            <person name="Takano J."/>
            <person name="Nomura N."/>
            <person name="Kikuno R."/>
            <person name="Nagase T."/>
            <person name="Ohara O."/>
        </authorList>
    </citation>
    <scope>NUCLEOTIDE SEQUENCE [LARGE SCALE MRNA] OF 522-928</scope>
    <scope>VARIANT ASN-692</scope>
    <source>
        <tissue>Spleen</tissue>
    </source>
</reference>
<reference key="8">
    <citation type="journal article" date="2006" name="Hum. Pathol.">
        <title>A novel tumor marker, Niban, is expressed in subsets of thyroid tumors and Hashimoto's thyroiditis.</title>
        <authorList>
            <person name="Matsumoto F."/>
            <person name="Fujii H."/>
            <person name="Abe M."/>
            <person name="Kajino K."/>
            <person name="Kobayashi T."/>
            <person name="Matsumoto T."/>
            <person name="Ikeda K."/>
            <person name="Hino O."/>
        </authorList>
    </citation>
    <scope>SUBCELLULAR LOCATION</scope>
    <scope>TISSUE SPECIFICITY</scope>
</reference>
<reference key="9">
    <citation type="journal article" date="2008" name="Proc. Natl. Acad. Sci. U.S.A.">
        <title>A quantitative atlas of mitotic phosphorylation.</title>
        <authorList>
            <person name="Dephoure N."/>
            <person name="Zhou C."/>
            <person name="Villen J."/>
            <person name="Beausoleil S.A."/>
            <person name="Bakalarski C.E."/>
            <person name="Elledge S.J."/>
            <person name="Gygi S.P."/>
        </authorList>
    </citation>
    <scope>PHOSPHORYLATION [LARGE SCALE ANALYSIS] AT SER-579; SER-596; SER-602; SER-646 AND SER-926</scope>
    <scope>IDENTIFICATION BY MASS SPECTROMETRY [LARGE SCALE ANALYSIS]</scope>
    <source>
        <tissue>Cervix carcinoma</tissue>
    </source>
</reference>
<reference key="10">
    <citation type="journal article" date="2010" name="Sci. Signal.">
        <title>Quantitative phosphoproteomics reveals widespread full phosphorylation site occupancy during mitosis.</title>
        <authorList>
            <person name="Olsen J.V."/>
            <person name="Vermeulen M."/>
            <person name="Santamaria A."/>
            <person name="Kumar C."/>
            <person name="Miller M.L."/>
            <person name="Jensen L.J."/>
            <person name="Gnad F."/>
            <person name="Cox J."/>
            <person name="Jensen T.S."/>
            <person name="Nigg E.A."/>
            <person name="Brunak S."/>
            <person name="Mann M."/>
        </authorList>
    </citation>
    <scope>PHOSPHORYLATION [LARGE SCALE ANALYSIS] AT SER-602 AND SER-926</scope>
    <scope>IDENTIFICATION BY MASS SPECTROMETRY [LARGE SCALE ANALYSIS]</scope>
    <source>
        <tissue>Cervix carcinoma</tissue>
    </source>
</reference>
<reference key="11">
    <citation type="journal article" date="2011" name="BMC Syst. Biol.">
        <title>Initial characterization of the human central proteome.</title>
        <authorList>
            <person name="Burkard T.R."/>
            <person name="Planyavsky M."/>
            <person name="Kaupe I."/>
            <person name="Breitwieser F.P."/>
            <person name="Buerckstuemmer T."/>
            <person name="Bennett K.L."/>
            <person name="Superti-Furga G."/>
            <person name="Colinge J."/>
        </authorList>
    </citation>
    <scope>IDENTIFICATION BY MASS SPECTROMETRY [LARGE SCALE ANALYSIS]</scope>
</reference>
<reference key="12">
    <citation type="journal article" date="2013" name="J. Proteome Res.">
        <title>Toward a comprehensive characterization of a human cancer cell phosphoproteome.</title>
        <authorList>
            <person name="Zhou H."/>
            <person name="Di Palma S."/>
            <person name="Preisinger C."/>
            <person name="Peng M."/>
            <person name="Polat A.N."/>
            <person name="Heck A.J."/>
            <person name="Mohammed S."/>
        </authorList>
    </citation>
    <scope>IDENTIFICATION BY MASS SPECTROMETRY [LARGE SCALE ANALYSIS]</scope>
    <source>
        <tissue>Erythroleukemia</tissue>
    </source>
</reference>
<reference key="13">
    <citation type="journal article" date="2014" name="J. Proteomics">
        <title>An enzyme assisted RP-RPLC approach for in-depth analysis of human liver phosphoproteome.</title>
        <authorList>
            <person name="Bian Y."/>
            <person name="Song C."/>
            <person name="Cheng K."/>
            <person name="Dong M."/>
            <person name="Wang F."/>
            <person name="Huang J."/>
            <person name="Sun D."/>
            <person name="Wang L."/>
            <person name="Ye M."/>
            <person name="Zou H."/>
        </authorList>
    </citation>
    <scope>PHOSPHORYLATION [LARGE SCALE ANALYSIS] AT SER-582; SER-602 AND SER-708</scope>
    <scope>IDENTIFICATION BY MASS SPECTROMETRY [LARGE SCALE ANALYSIS]</scope>
    <source>
        <tissue>Liver</tissue>
    </source>
</reference>
<reference key="14">
    <citation type="journal article" date="2015" name="Angew. Chem. Int. Ed.">
        <title>Multifunctional reagents for quantitative proteome-wide analysis of protein modification in human cells and dynamic profiling of protein lipidation during vertebrate development.</title>
        <authorList>
            <person name="Broncel M."/>
            <person name="Serwa R.A."/>
            <person name="Ciepla P."/>
            <person name="Krause E."/>
            <person name="Dallman M.J."/>
            <person name="Magee A.I."/>
            <person name="Tate E.W."/>
        </authorList>
    </citation>
    <scope>MYRISTOYLATION AT GLY-2</scope>
    <scope>CLEAVAGE OF INITIATOR METHIONINE</scope>
    <scope>IDENTIFICATION BY MASS SPECTROMETRY</scope>
</reference>
<keyword id="KW-0963">Cytoplasm</keyword>
<keyword id="KW-0449">Lipoprotein</keyword>
<keyword id="KW-0472">Membrane</keyword>
<keyword id="KW-0519">Myristate</keyword>
<keyword id="KW-0597">Phosphoprotein</keyword>
<keyword id="KW-1267">Proteomics identification</keyword>
<keyword id="KW-1185">Reference proteome</keyword>
<keyword id="KW-0346">Stress response</keyword>
<keyword id="KW-0810">Translation regulation</keyword>
<accession>Q9BZQ8</accession>
<accession>Q2TTR2</accession>
<accession>Q5TEM8</accession>
<accession>Q8TEI5</accession>
<accession>Q9H593</accession>
<accession>Q9H9Y8</accession>
<accession>Q9HCB9</accession>
<feature type="initiator methionine" description="Removed" evidence="5">
    <location>
        <position position="1"/>
    </location>
</feature>
<feature type="chain" id="PRO_0000213120" description="Protein Niban 1">
    <location>
        <begin position="2"/>
        <end position="928"/>
    </location>
</feature>
<feature type="region of interest" description="Disordered" evidence="2">
    <location>
        <begin position="580"/>
        <end position="600"/>
    </location>
</feature>
<feature type="region of interest" description="Disordered" evidence="2">
    <location>
        <begin position="618"/>
        <end position="654"/>
    </location>
</feature>
<feature type="region of interest" description="Disordered" evidence="2">
    <location>
        <begin position="669"/>
        <end position="707"/>
    </location>
</feature>
<feature type="region of interest" description="Disordered" evidence="2">
    <location>
        <begin position="723"/>
        <end position="877"/>
    </location>
</feature>
<feature type="region of interest" description="Disordered" evidence="2">
    <location>
        <begin position="899"/>
        <end position="928"/>
    </location>
</feature>
<feature type="compositionally biased region" description="Polar residues" evidence="2">
    <location>
        <begin position="580"/>
        <end position="596"/>
    </location>
</feature>
<feature type="compositionally biased region" description="Acidic residues" evidence="2">
    <location>
        <begin position="690"/>
        <end position="701"/>
    </location>
</feature>
<feature type="compositionally biased region" description="Low complexity" evidence="2">
    <location>
        <begin position="801"/>
        <end position="818"/>
    </location>
</feature>
<feature type="compositionally biased region" description="Basic and acidic residues" evidence="2">
    <location>
        <begin position="825"/>
        <end position="834"/>
    </location>
</feature>
<feature type="compositionally biased region" description="Low complexity" evidence="2">
    <location>
        <begin position="865"/>
        <end position="877"/>
    </location>
</feature>
<feature type="compositionally biased region" description="Basic and acidic residues" evidence="2">
    <location>
        <begin position="905"/>
        <end position="915"/>
    </location>
</feature>
<feature type="modified residue" description="Phosphoserine" evidence="9">
    <location>
        <position position="579"/>
    </location>
</feature>
<feature type="modified residue" description="Phosphoserine" evidence="11">
    <location>
        <position position="582"/>
    </location>
</feature>
<feature type="modified residue" description="Phosphoserine" evidence="9">
    <location>
        <position position="596"/>
    </location>
</feature>
<feature type="modified residue" description="Phosphoserine" evidence="9 10 11">
    <location>
        <position position="602"/>
    </location>
</feature>
<feature type="modified residue" description="Phosphoserine" evidence="9">
    <location>
        <position position="646"/>
    </location>
</feature>
<feature type="modified residue" description="Phosphoserine" evidence="11">
    <location>
        <position position="708"/>
    </location>
</feature>
<feature type="modified residue" description="Phosphoserine" evidence="9 10">
    <location>
        <position position="926"/>
    </location>
</feature>
<feature type="lipid moiety-binding region" description="N-myristoyl glycine" evidence="5">
    <location>
        <position position="2"/>
    </location>
</feature>
<feature type="sequence variant" id="VAR_053533" description="In dbSNP:rs12750174.">
    <original>S</original>
    <variation>L</variation>
    <location>
        <position position="633"/>
    </location>
</feature>
<feature type="sequence variant" id="VAR_053534" description="In dbSNP:rs35704242." evidence="6">
    <original>D</original>
    <variation>N</variation>
    <location>
        <position position="692"/>
    </location>
</feature>
<feature type="sequence variant" id="VAR_053535" description="In dbSNP:rs17313374.">
    <original>V</original>
    <variation>M</variation>
    <location>
        <position position="720"/>
    </location>
</feature>
<feature type="sequence variant" id="VAR_053536" description="In dbSNP:rs35601690.">
    <original>G</original>
    <variation>S</variation>
    <location>
        <position position="830"/>
    </location>
</feature>
<feature type="sequence conflict" description="In Ref. 4; AAT52218." evidence="7" ref="4">
    <original>N</original>
    <variation>D</variation>
    <location>
        <position position="27"/>
    </location>
</feature>
<feature type="sequence conflict" description="In Ref. 3; BAB14079." evidence="7" ref="3">
    <original>E</original>
    <variation>G</variation>
    <location>
        <position position="106"/>
    </location>
</feature>
<feature type="sequence conflict" description="In Ref. 3; BAB14079." evidence="7" ref="3">
    <original>D</original>
    <variation>E</variation>
    <location>
        <position position="201"/>
    </location>
</feature>
<feature type="sequence conflict" description="In Ref. 7; BAB84965." evidence="7" ref="7">
    <original>L</original>
    <variation>P</variation>
    <location>
        <position position="609"/>
    </location>
</feature>
<feature type="sequence conflict" description="In Ref. 3; BAB14079." evidence="7" ref="3">
    <original>V</original>
    <variation>D</variation>
    <location>
        <position position="858"/>
    </location>
</feature>
<feature type="sequence conflict" description="In Ref. 3; BAB14079." evidence="7" ref="3">
    <original>E</original>
    <variation>D</variation>
    <location>
        <position position="863"/>
    </location>
</feature>